<comment type="function">
    <text evidence="3">Snake venom natriuretic peptide that exhibits hypotensive and vasorelaxant effects. Produces a dose-dependent hypotension in rats, followed by significant increases in concentrations of markers of nitric oxide (NO) formation measured in the plasma and vasorelaxation in a thoracic aortic ring bath. The peptide may exert its hypotensive action, at least in part, through stimulation of NO production. The vasorelaxant effect is endothelium-dependent and does not appear to be mediated by the natriuretic peptide receptor-A, as its action is not modified by isatin (a potent NPR1 antagonist). May act by activating the natriuretic peptide receptor-B (NPR2).</text>
</comment>
<comment type="subcellular location">
    <subcellularLocation>
        <location evidence="3">Secreted</location>
    </subcellularLocation>
</comment>
<comment type="tissue specificity">
    <text evidence="5">Expressed by the venom gland.</text>
</comment>
<comment type="mass spectrometry" mass="3419.88" method="MALDI" evidence="3">
    <text>Average mass.</text>
</comment>
<comment type="miscellaneous">
    <text evidence="5">The hypotensive effect is not mediated by the natriuretic peptide receptor-A (NPR1).</text>
</comment>
<comment type="similarity">
    <text evidence="2">Belongs to the natriuretic peptide family. Snake NP subfamily.</text>
</comment>
<organism>
    <name type="scientific">Crotalus lutosus abyssus</name>
    <name type="common">Grand Canyon rattlesnake</name>
    <name type="synonym">Crotalus oreganus abyssus</name>
    <dbReference type="NCBI Taxonomy" id="128077"/>
    <lineage>
        <taxon>Eukaryota</taxon>
        <taxon>Metazoa</taxon>
        <taxon>Chordata</taxon>
        <taxon>Craniata</taxon>
        <taxon>Vertebrata</taxon>
        <taxon>Euteleostomi</taxon>
        <taxon>Lepidosauria</taxon>
        <taxon>Squamata</taxon>
        <taxon>Bifurcata</taxon>
        <taxon>Unidentata</taxon>
        <taxon>Episquamata</taxon>
        <taxon>Toxicofera</taxon>
        <taxon>Serpentes</taxon>
        <taxon>Colubroidea</taxon>
        <taxon>Viperidae</taxon>
        <taxon>Crotalinae</taxon>
        <taxon>Crotalus</taxon>
    </lineage>
</organism>
<dbReference type="SMR" id="B3EWY2"/>
<dbReference type="GO" id="GO:0005576">
    <property type="term" value="C:extracellular region"/>
    <property type="evidence" value="ECO:0007669"/>
    <property type="project" value="UniProtKB-SubCell"/>
</dbReference>
<dbReference type="GO" id="GO:0005179">
    <property type="term" value="F:hormone activity"/>
    <property type="evidence" value="ECO:0007669"/>
    <property type="project" value="InterPro"/>
</dbReference>
<dbReference type="GO" id="GO:0090729">
    <property type="term" value="F:toxin activity"/>
    <property type="evidence" value="ECO:0007669"/>
    <property type="project" value="UniProtKB-KW"/>
</dbReference>
<dbReference type="GO" id="GO:0097746">
    <property type="term" value="P:blood vessel diameter maintenance"/>
    <property type="evidence" value="ECO:0000314"/>
    <property type="project" value="UniProtKB"/>
</dbReference>
<dbReference type="GO" id="GO:0008217">
    <property type="term" value="P:regulation of blood pressure"/>
    <property type="evidence" value="ECO:0000314"/>
    <property type="project" value="UniProtKB"/>
</dbReference>
<dbReference type="GO" id="GO:0042311">
    <property type="term" value="P:vasodilation"/>
    <property type="evidence" value="ECO:0007669"/>
    <property type="project" value="UniProtKB-KW"/>
</dbReference>
<dbReference type="InterPro" id="IPR000663">
    <property type="entry name" value="Natr_peptide"/>
</dbReference>
<dbReference type="InterPro" id="IPR030480">
    <property type="entry name" value="Natr_peptide_CS"/>
</dbReference>
<dbReference type="InterPro" id="IPR002408">
    <property type="entry name" value="Natriuretic_peptide_brain"/>
</dbReference>
<dbReference type="Pfam" id="PF00212">
    <property type="entry name" value="ANP"/>
    <property type="match status" value="1"/>
</dbReference>
<dbReference type="PRINTS" id="PR00712">
    <property type="entry name" value="BNATPEPTIDE"/>
</dbReference>
<dbReference type="PRINTS" id="PR00710">
    <property type="entry name" value="NATPEPTIDES"/>
</dbReference>
<dbReference type="SMART" id="SM00183">
    <property type="entry name" value="NAT_PEP"/>
    <property type="match status" value="1"/>
</dbReference>
<dbReference type="PROSITE" id="PS00263">
    <property type="entry name" value="NATRIURETIC_PEPTIDE"/>
    <property type="match status" value="1"/>
</dbReference>
<name>BNPL2_CROLY</name>
<evidence type="ECO:0000250" key="1">
    <source>
        <dbReference type="UniProtKB" id="P83228"/>
    </source>
</evidence>
<evidence type="ECO:0000255" key="2"/>
<evidence type="ECO:0000269" key="3">
    <source>
    </source>
</evidence>
<evidence type="ECO:0000303" key="4">
    <source>
    </source>
</evidence>
<evidence type="ECO:0000305" key="5">
    <source>
    </source>
</evidence>
<reference key="1">
    <citation type="journal article" date="2012" name="Peptides">
        <title>Vascular effects and electrolyte homeostasis of the natriuretic peptide isolated from Crotalus oreganus abyssus (North American Grand Canyon rattlesnake) venom.</title>
        <authorList>
            <person name="Da Silva S.L."/>
            <person name="Dias-Junior C.A."/>
            <person name="Baldasso P.A."/>
            <person name="Damico D.C."/>
            <person name="Carvalho B.M."/>
            <person name="Garanto A."/>
            <person name="Acosta G."/>
            <person name="Oliveira E."/>
            <person name="Albericio F."/>
            <person name="Soares A.M."/>
            <person name="Marangoni S."/>
            <person name="Resende R.R."/>
        </authorList>
    </citation>
    <scope>PROTEIN SEQUENCE</scope>
    <scope>FUNCTION</scope>
    <scope>MASS SPECTROMETRY</scope>
    <scope>SUBCELLULAR LOCATION</scope>
    <source>
        <tissue>Venom</tissue>
    </source>
</reference>
<keyword id="KW-0903">Direct protein sequencing</keyword>
<keyword id="KW-1015">Disulfide bond</keyword>
<keyword id="KW-0382">Hypotensive agent</keyword>
<keyword id="KW-0964">Secreted</keyword>
<keyword id="KW-0800">Toxin</keyword>
<keyword id="KW-0838">Vasoactive</keyword>
<keyword id="KW-0840">Vasodilator</keyword>
<sequence length="32" mass="3419">SYGISSGCFGLKLDRIGTMSGLGCWRLLQDSP</sequence>
<proteinExistence type="evidence at protein level"/>
<protein>
    <recommendedName>
        <fullName evidence="4">Natriuretic peptide Coa_NP2</fullName>
    </recommendedName>
</protein>
<accession>B3EWY2</accession>
<feature type="peptide" id="PRO_0000421178" description="Natriuretic peptide Coa_NP2" evidence="3">
    <location>
        <begin position="1"/>
        <end position="32"/>
    </location>
</feature>
<feature type="disulfide bond" evidence="1">
    <location>
        <begin position="8"/>
        <end position="24"/>
    </location>
</feature>